<name>KNOX2_MAIZE</name>
<gene>
    <name type="primary">KNOX2</name>
</gene>
<reference key="1">
    <citation type="journal article" date="1994" name="Plant Cell">
        <title>Sequence analysis and expression patterns divide the Maize knotted1-like homeobox genes into two classes.</title>
        <authorList>
            <person name="Kerstetter R."/>
            <person name="Vollbrecht E."/>
            <person name="Lowe B."/>
            <person name="Veit B."/>
            <person name="Yamaguchi J."/>
            <person name="Hake S."/>
        </authorList>
    </citation>
    <scope>NUCLEOTIDE SEQUENCE</scope>
    <source>
        <tissue>Ear of corn</tissue>
        <tissue>Seedling</tissue>
    </source>
</reference>
<evidence type="ECO:0000255" key="1">
    <source>
        <dbReference type="PROSITE-ProRule" id="PRU00108"/>
    </source>
</evidence>
<evidence type="ECO:0000255" key="2">
    <source>
        <dbReference type="PROSITE-ProRule" id="PRU00559"/>
    </source>
</evidence>
<evidence type="ECO:0000305" key="3"/>
<dbReference type="SMR" id="P56660"/>
<dbReference type="STRING" id="4577.P56660"/>
<dbReference type="PaxDb" id="4577-GRMZM2G055243_P01"/>
<dbReference type="eggNOG" id="KOG0773">
    <property type="taxonomic scope" value="Eukaryota"/>
</dbReference>
<dbReference type="InParanoid" id="P56660"/>
<dbReference type="Proteomes" id="UP000007305">
    <property type="component" value="Unplaced"/>
</dbReference>
<dbReference type="ExpressionAtlas" id="P56660">
    <property type="expression patterns" value="baseline and differential"/>
</dbReference>
<dbReference type="GO" id="GO:0005634">
    <property type="term" value="C:nucleus"/>
    <property type="evidence" value="ECO:0007669"/>
    <property type="project" value="UniProtKB-SubCell"/>
</dbReference>
<dbReference type="GO" id="GO:0003677">
    <property type="term" value="F:DNA binding"/>
    <property type="evidence" value="ECO:0007669"/>
    <property type="project" value="UniProtKB-KW"/>
</dbReference>
<dbReference type="GO" id="GO:0006355">
    <property type="term" value="P:regulation of DNA-templated transcription"/>
    <property type="evidence" value="ECO:0007669"/>
    <property type="project" value="InterPro"/>
</dbReference>
<dbReference type="CDD" id="cd00086">
    <property type="entry name" value="homeodomain"/>
    <property type="match status" value="1"/>
</dbReference>
<dbReference type="FunFam" id="1.10.10.60:FF:000143">
    <property type="entry name" value="homeobox protein knotted-1-like 3 isoform X1"/>
    <property type="match status" value="1"/>
</dbReference>
<dbReference type="Gene3D" id="1.10.10.60">
    <property type="entry name" value="Homeodomain-like"/>
    <property type="match status" value="1"/>
</dbReference>
<dbReference type="InterPro" id="IPR005539">
    <property type="entry name" value="ELK_dom"/>
</dbReference>
<dbReference type="InterPro" id="IPR001356">
    <property type="entry name" value="HD"/>
</dbReference>
<dbReference type="InterPro" id="IPR009057">
    <property type="entry name" value="Homeodomain-like_sf"/>
</dbReference>
<dbReference type="InterPro" id="IPR008422">
    <property type="entry name" value="KN_HD"/>
</dbReference>
<dbReference type="InterPro" id="IPR050224">
    <property type="entry name" value="TALE_homeobox"/>
</dbReference>
<dbReference type="PANTHER" id="PTHR11850">
    <property type="entry name" value="HOMEOBOX PROTEIN TRANSCRIPTION FACTORS"/>
    <property type="match status" value="1"/>
</dbReference>
<dbReference type="Pfam" id="PF03789">
    <property type="entry name" value="ELK"/>
    <property type="match status" value="1"/>
</dbReference>
<dbReference type="Pfam" id="PF05920">
    <property type="entry name" value="Homeobox_KN"/>
    <property type="match status" value="1"/>
</dbReference>
<dbReference type="SMART" id="SM01188">
    <property type="entry name" value="ELK"/>
    <property type="match status" value="1"/>
</dbReference>
<dbReference type="SMART" id="SM00389">
    <property type="entry name" value="HOX"/>
    <property type="match status" value="1"/>
</dbReference>
<dbReference type="SUPFAM" id="SSF46689">
    <property type="entry name" value="Homeodomain-like"/>
    <property type="match status" value="1"/>
</dbReference>
<dbReference type="PROSITE" id="PS51213">
    <property type="entry name" value="ELK"/>
    <property type="match status" value="1"/>
</dbReference>
<dbReference type="PROSITE" id="PS00027">
    <property type="entry name" value="HOMEOBOX_1"/>
    <property type="match status" value="1"/>
</dbReference>
<dbReference type="PROSITE" id="PS50071">
    <property type="entry name" value="HOMEOBOX_2"/>
    <property type="match status" value="1"/>
</dbReference>
<proteinExistence type="evidence at transcript level"/>
<sequence>VRQELKHELKQGYRDKLVDIREEILRKRRAGKLPGDTASTLKAWWQAHSKWPYPTEEDKARLVQETGLQLKQINNWFINQRKRNWHNN</sequence>
<keyword id="KW-0238">DNA-binding</keyword>
<keyword id="KW-0371">Homeobox</keyword>
<keyword id="KW-0539">Nucleus</keyword>
<keyword id="KW-1185">Reference proteome</keyword>
<comment type="subcellular location">
    <subcellularLocation>
        <location evidence="3">Nucleus</location>
    </subcellularLocation>
</comment>
<comment type="tissue specificity">
    <text>Expressed in all tissues examined. Highest expression in leaves.</text>
</comment>
<comment type="similarity">
    <text evidence="2">Belongs to the TALE/KNOX homeobox family.</text>
</comment>
<protein>
    <recommendedName>
        <fullName>Homeobox protein knotted-1-like 2</fullName>
    </recommendedName>
</protein>
<feature type="chain" id="PRO_0000048963" description="Homeobox protein knotted-1-like 2">
    <location>
        <begin position="1" status="less than"/>
        <end position="88" status="greater than"/>
    </location>
</feature>
<feature type="domain" description="ELK" evidence="2">
    <location>
        <begin position="4"/>
        <end position="24"/>
    </location>
</feature>
<feature type="DNA-binding region" description="Homeobox; TALE-type" evidence="1">
    <location>
        <begin position="25"/>
        <end position="88"/>
    </location>
</feature>
<feature type="non-terminal residue">
    <location>
        <position position="1"/>
    </location>
</feature>
<feature type="non-terminal residue">
    <location>
        <position position="88"/>
    </location>
</feature>
<accession>P56660</accession>
<organism>
    <name type="scientific">Zea mays</name>
    <name type="common">Maize</name>
    <dbReference type="NCBI Taxonomy" id="4577"/>
    <lineage>
        <taxon>Eukaryota</taxon>
        <taxon>Viridiplantae</taxon>
        <taxon>Streptophyta</taxon>
        <taxon>Embryophyta</taxon>
        <taxon>Tracheophyta</taxon>
        <taxon>Spermatophyta</taxon>
        <taxon>Magnoliopsida</taxon>
        <taxon>Liliopsida</taxon>
        <taxon>Poales</taxon>
        <taxon>Poaceae</taxon>
        <taxon>PACMAD clade</taxon>
        <taxon>Panicoideae</taxon>
        <taxon>Andropogonodae</taxon>
        <taxon>Andropogoneae</taxon>
        <taxon>Tripsacinae</taxon>
        <taxon>Zea</taxon>
    </lineage>
</organism>